<organism>
    <name type="scientific">Bifidobacterium longum (strain NCC 2705)</name>
    <dbReference type="NCBI Taxonomy" id="206672"/>
    <lineage>
        <taxon>Bacteria</taxon>
        <taxon>Bacillati</taxon>
        <taxon>Actinomycetota</taxon>
        <taxon>Actinomycetes</taxon>
        <taxon>Bifidobacteriales</taxon>
        <taxon>Bifidobacteriaceae</taxon>
        <taxon>Bifidobacterium</taxon>
    </lineage>
</organism>
<name>RECA_BIFLO</name>
<comment type="function">
    <text evidence="1">Can catalyze the hydrolysis of ATP in the presence of single-stranded DNA, the ATP-dependent uptake of single-stranded DNA by duplex DNA, and the ATP-dependent hybridization of homologous single-stranded DNAs. It interacts with LexA causing its activation and leading to its autocatalytic cleavage.</text>
</comment>
<comment type="subcellular location">
    <subcellularLocation>
        <location evidence="1">Cytoplasm</location>
    </subcellularLocation>
</comment>
<comment type="similarity">
    <text evidence="1">Belongs to the RecA family.</text>
</comment>
<keyword id="KW-0067">ATP-binding</keyword>
<keyword id="KW-0963">Cytoplasm</keyword>
<keyword id="KW-0227">DNA damage</keyword>
<keyword id="KW-0233">DNA recombination</keyword>
<keyword id="KW-0234">DNA repair</keyword>
<keyword id="KW-0238">DNA-binding</keyword>
<keyword id="KW-0547">Nucleotide-binding</keyword>
<keyword id="KW-1185">Reference proteome</keyword>
<keyword id="KW-0742">SOS response</keyword>
<gene>
    <name evidence="1" type="primary">recA</name>
    <name type="ordered locus">BL1415</name>
</gene>
<feature type="chain" id="PRO_0000122662" description="Protein RecA">
    <location>
        <begin position="1"/>
        <end position="397"/>
    </location>
</feature>
<feature type="region of interest" description="Disordered" evidence="2">
    <location>
        <begin position="1"/>
        <end position="23"/>
    </location>
</feature>
<feature type="binding site" evidence="1">
    <location>
        <begin position="83"/>
        <end position="90"/>
    </location>
    <ligand>
        <name>ATP</name>
        <dbReference type="ChEBI" id="CHEBI:30616"/>
    </ligand>
</feature>
<sequence>MALETKPAKDPAAEDKHELDPKRKAALDTALAQVEKSFGKGSAMRLGDQPEQNVEVIPTGSLALDMALGIGGLPKGRIVEIYGPESSGKTTLALHVVANAQKKGGVAAYIDAEHALDPAYARKLGVDTDSLIVSQPDNGEQALEIADMLIRSGALDVIVIDSVAALVPKAEIEGEMGDSHVGLQARLMSQALRKMTGALAQAGTTAIFINQLREKIGVFFGNPETTTGGKALKFYASVRLDIRRIQTLKNGDEAVGNRTRVKVVKNKMAPPFKSAEFDMLYGEGISREGSVIDMAQQVGVVKKSGSWFTYEGDQLGQGREKVRQFLKDNPAITEEIENKVKAEFGLIGSADQFAEDGEAAAAAAVSEAAAADVAKDSKAAAAPAAKTTRAKAGTAKA</sequence>
<evidence type="ECO:0000255" key="1">
    <source>
        <dbReference type="HAMAP-Rule" id="MF_00268"/>
    </source>
</evidence>
<evidence type="ECO:0000256" key="2">
    <source>
        <dbReference type="SAM" id="MobiDB-lite"/>
    </source>
</evidence>
<dbReference type="EMBL" id="AE014295">
    <property type="protein sequence ID" value="AAN25214.1"/>
    <property type="molecule type" value="Genomic_DNA"/>
</dbReference>
<dbReference type="RefSeq" id="NP_696578.1">
    <property type="nucleotide sequence ID" value="NC_004307.2"/>
</dbReference>
<dbReference type="RefSeq" id="WP_007052644.1">
    <property type="nucleotide sequence ID" value="NC_004307.2"/>
</dbReference>
<dbReference type="SMR" id="Q8G4G9"/>
<dbReference type="STRING" id="206672.BL1415"/>
<dbReference type="EnsemblBacteria" id="AAN25214">
    <property type="protein sequence ID" value="AAN25214"/>
    <property type="gene ID" value="BL1415"/>
</dbReference>
<dbReference type="GeneID" id="69578409"/>
<dbReference type="KEGG" id="blo:BL1415"/>
<dbReference type="PATRIC" id="fig|206672.9.peg.274"/>
<dbReference type="HOGENOM" id="CLU_040469_3_2_11"/>
<dbReference type="OrthoDB" id="9776733at2"/>
<dbReference type="PhylomeDB" id="Q8G4G9"/>
<dbReference type="Proteomes" id="UP000000439">
    <property type="component" value="Chromosome"/>
</dbReference>
<dbReference type="GO" id="GO:0005829">
    <property type="term" value="C:cytosol"/>
    <property type="evidence" value="ECO:0007669"/>
    <property type="project" value="TreeGrafter"/>
</dbReference>
<dbReference type="GO" id="GO:0005524">
    <property type="term" value="F:ATP binding"/>
    <property type="evidence" value="ECO:0007669"/>
    <property type="project" value="UniProtKB-UniRule"/>
</dbReference>
<dbReference type="GO" id="GO:0016887">
    <property type="term" value="F:ATP hydrolysis activity"/>
    <property type="evidence" value="ECO:0007669"/>
    <property type="project" value="InterPro"/>
</dbReference>
<dbReference type="GO" id="GO:0140664">
    <property type="term" value="F:ATP-dependent DNA damage sensor activity"/>
    <property type="evidence" value="ECO:0007669"/>
    <property type="project" value="InterPro"/>
</dbReference>
<dbReference type="GO" id="GO:0003684">
    <property type="term" value="F:damaged DNA binding"/>
    <property type="evidence" value="ECO:0007669"/>
    <property type="project" value="UniProtKB-UniRule"/>
</dbReference>
<dbReference type="GO" id="GO:0003697">
    <property type="term" value="F:single-stranded DNA binding"/>
    <property type="evidence" value="ECO:0007669"/>
    <property type="project" value="UniProtKB-UniRule"/>
</dbReference>
<dbReference type="GO" id="GO:0006310">
    <property type="term" value="P:DNA recombination"/>
    <property type="evidence" value="ECO:0007669"/>
    <property type="project" value="UniProtKB-UniRule"/>
</dbReference>
<dbReference type="GO" id="GO:0006281">
    <property type="term" value="P:DNA repair"/>
    <property type="evidence" value="ECO:0007669"/>
    <property type="project" value="UniProtKB-UniRule"/>
</dbReference>
<dbReference type="GO" id="GO:0009432">
    <property type="term" value="P:SOS response"/>
    <property type="evidence" value="ECO:0007669"/>
    <property type="project" value="UniProtKB-UniRule"/>
</dbReference>
<dbReference type="CDD" id="cd00983">
    <property type="entry name" value="RecA"/>
    <property type="match status" value="1"/>
</dbReference>
<dbReference type="FunFam" id="3.40.50.300:FF:000087">
    <property type="entry name" value="Recombinase RecA"/>
    <property type="match status" value="1"/>
</dbReference>
<dbReference type="Gene3D" id="3.40.50.300">
    <property type="entry name" value="P-loop containing nucleotide triphosphate hydrolases"/>
    <property type="match status" value="1"/>
</dbReference>
<dbReference type="HAMAP" id="MF_00268">
    <property type="entry name" value="RecA"/>
    <property type="match status" value="1"/>
</dbReference>
<dbReference type="InterPro" id="IPR003593">
    <property type="entry name" value="AAA+_ATPase"/>
</dbReference>
<dbReference type="InterPro" id="IPR013765">
    <property type="entry name" value="DNA_recomb/repair_RecA"/>
</dbReference>
<dbReference type="InterPro" id="IPR020584">
    <property type="entry name" value="DNA_recomb/repair_RecA_CS"/>
</dbReference>
<dbReference type="InterPro" id="IPR027417">
    <property type="entry name" value="P-loop_NTPase"/>
</dbReference>
<dbReference type="InterPro" id="IPR049261">
    <property type="entry name" value="RecA-like_C"/>
</dbReference>
<dbReference type="InterPro" id="IPR049428">
    <property type="entry name" value="RecA-like_N"/>
</dbReference>
<dbReference type="InterPro" id="IPR020588">
    <property type="entry name" value="RecA_ATP-bd"/>
</dbReference>
<dbReference type="InterPro" id="IPR023400">
    <property type="entry name" value="RecA_C_sf"/>
</dbReference>
<dbReference type="InterPro" id="IPR020587">
    <property type="entry name" value="RecA_monomer-monomer_interface"/>
</dbReference>
<dbReference type="NCBIfam" id="TIGR02012">
    <property type="entry name" value="tigrfam_recA"/>
    <property type="match status" value="1"/>
</dbReference>
<dbReference type="PANTHER" id="PTHR45900:SF1">
    <property type="entry name" value="MITOCHONDRIAL DNA REPAIR PROTEIN RECA HOMOLOG-RELATED"/>
    <property type="match status" value="1"/>
</dbReference>
<dbReference type="PANTHER" id="PTHR45900">
    <property type="entry name" value="RECA"/>
    <property type="match status" value="1"/>
</dbReference>
<dbReference type="Pfam" id="PF00154">
    <property type="entry name" value="RecA"/>
    <property type="match status" value="1"/>
</dbReference>
<dbReference type="Pfam" id="PF21096">
    <property type="entry name" value="RecA_C"/>
    <property type="match status" value="1"/>
</dbReference>
<dbReference type="PRINTS" id="PR00142">
    <property type="entry name" value="RECA"/>
</dbReference>
<dbReference type="SMART" id="SM00382">
    <property type="entry name" value="AAA"/>
    <property type="match status" value="1"/>
</dbReference>
<dbReference type="SUPFAM" id="SSF52540">
    <property type="entry name" value="P-loop containing nucleoside triphosphate hydrolases"/>
    <property type="match status" value="1"/>
</dbReference>
<dbReference type="SUPFAM" id="SSF54752">
    <property type="entry name" value="RecA protein, C-terminal domain"/>
    <property type="match status" value="1"/>
</dbReference>
<dbReference type="PROSITE" id="PS00321">
    <property type="entry name" value="RECA_1"/>
    <property type="match status" value="1"/>
</dbReference>
<dbReference type="PROSITE" id="PS50162">
    <property type="entry name" value="RECA_2"/>
    <property type="match status" value="1"/>
</dbReference>
<dbReference type="PROSITE" id="PS50163">
    <property type="entry name" value="RECA_3"/>
    <property type="match status" value="1"/>
</dbReference>
<accession>Q8G4G9</accession>
<protein>
    <recommendedName>
        <fullName evidence="1">Protein RecA</fullName>
    </recommendedName>
    <alternativeName>
        <fullName evidence="1">Recombinase A</fullName>
    </alternativeName>
</protein>
<proteinExistence type="inferred from homology"/>
<reference key="1">
    <citation type="journal article" date="2002" name="Proc. Natl. Acad. Sci. U.S.A.">
        <title>The genome sequence of Bifidobacterium longum reflects its adaptation to the human gastrointestinal tract.</title>
        <authorList>
            <person name="Schell M.A."/>
            <person name="Karmirantzou M."/>
            <person name="Snel B."/>
            <person name="Vilanova D."/>
            <person name="Berger B."/>
            <person name="Pessi G."/>
            <person name="Zwahlen M.-C."/>
            <person name="Desiere F."/>
            <person name="Bork P."/>
            <person name="Delley M."/>
            <person name="Pridmore R.D."/>
            <person name="Arigoni F."/>
        </authorList>
    </citation>
    <scope>NUCLEOTIDE SEQUENCE [LARGE SCALE GENOMIC DNA]</scope>
    <source>
        <strain>NCC 2705</strain>
    </source>
</reference>